<proteinExistence type="predicted"/>
<keyword id="KW-1185">Reference proteome</keyword>
<dbReference type="EMBL" id="AL009126">
    <property type="protein sequence ID" value="CAX52602.1"/>
    <property type="molecule type" value="Genomic_DNA"/>
</dbReference>
<dbReference type="RefSeq" id="WP_003245588.1">
    <property type="nucleotide sequence ID" value="NZ_OZ025638.1"/>
</dbReference>
<dbReference type="RefSeq" id="YP_003097712.1">
    <property type="nucleotide sequence ID" value="NC_000964.3"/>
</dbReference>
<dbReference type="FunCoup" id="C0H3Z5">
    <property type="interactions" value="36"/>
</dbReference>
<dbReference type="STRING" id="224308.BSU12539"/>
<dbReference type="PaxDb" id="224308-BSU12539"/>
<dbReference type="EnsemblBacteria" id="CAX52602">
    <property type="protein sequence ID" value="CAX52602"/>
    <property type="gene ID" value="BSU_12539"/>
</dbReference>
<dbReference type="GeneID" id="8303179"/>
<dbReference type="KEGG" id="bsu:BSU12539"/>
<dbReference type="PATRIC" id="fig|224308.179.peg.1356"/>
<dbReference type="InParanoid" id="C0H3Z5"/>
<dbReference type="OrthoDB" id="9796020at2"/>
<dbReference type="BioCyc" id="BSUB:BSU12539-MONOMER"/>
<dbReference type="Proteomes" id="UP000001570">
    <property type="component" value="Chromosome"/>
</dbReference>
<protein>
    <recommendedName>
        <fullName>Uncharacterized protein YkzK</fullName>
    </recommendedName>
</protein>
<name>YKZK_BACSU</name>
<organism>
    <name type="scientific">Bacillus subtilis (strain 168)</name>
    <dbReference type="NCBI Taxonomy" id="224308"/>
    <lineage>
        <taxon>Bacteria</taxon>
        <taxon>Bacillati</taxon>
        <taxon>Bacillota</taxon>
        <taxon>Bacilli</taxon>
        <taxon>Bacillales</taxon>
        <taxon>Bacillaceae</taxon>
        <taxon>Bacillus</taxon>
    </lineage>
</organism>
<reference key="1">
    <citation type="journal article" date="1997" name="Nature">
        <title>The complete genome sequence of the Gram-positive bacterium Bacillus subtilis.</title>
        <authorList>
            <person name="Kunst F."/>
            <person name="Ogasawara N."/>
            <person name="Moszer I."/>
            <person name="Albertini A.M."/>
            <person name="Alloni G."/>
            <person name="Azevedo V."/>
            <person name="Bertero M.G."/>
            <person name="Bessieres P."/>
            <person name="Bolotin A."/>
            <person name="Borchert S."/>
            <person name="Borriss R."/>
            <person name="Boursier L."/>
            <person name="Brans A."/>
            <person name="Braun M."/>
            <person name="Brignell S.C."/>
            <person name="Bron S."/>
            <person name="Brouillet S."/>
            <person name="Bruschi C.V."/>
            <person name="Caldwell B."/>
            <person name="Capuano V."/>
            <person name="Carter N.M."/>
            <person name="Choi S.-K."/>
            <person name="Codani J.-J."/>
            <person name="Connerton I.F."/>
            <person name="Cummings N.J."/>
            <person name="Daniel R.A."/>
            <person name="Denizot F."/>
            <person name="Devine K.M."/>
            <person name="Duesterhoeft A."/>
            <person name="Ehrlich S.D."/>
            <person name="Emmerson P.T."/>
            <person name="Entian K.-D."/>
            <person name="Errington J."/>
            <person name="Fabret C."/>
            <person name="Ferrari E."/>
            <person name="Foulger D."/>
            <person name="Fritz C."/>
            <person name="Fujita M."/>
            <person name="Fujita Y."/>
            <person name="Fuma S."/>
            <person name="Galizzi A."/>
            <person name="Galleron N."/>
            <person name="Ghim S.-Y."/>
            <person name="Glaser P."/>
            <person name="Goffeau A."/>
            <person name="Golightly E.J."/>
            <person name="Grandi G."/>
            <person name="Guiseppi G."/>
            <person name="Guy B.J."/>
            <person name="Haga K."/>
            <person name="Haiech J."/>
            <person name="Harwood C.R."/>
            <person name="Henaut A."/>
            <person name="Hilbert H."/>
            <person name="Holsappel S."/>
            <person name="Hosono S."/>
            <person name="Hullo M.-F."/>
            <person name="Itaya M."/>
            <person name="Jones L.-M."/>
            <person name="Joris B."/>
            <person name="Karamata D."/>
            <person name="Kasahara Y."/>
            <person name="Klaerr-Blanchard M."/>
            <person name="Klein C."/>
            <person name="Kobayashi Y."/>
            <person name="Koetter P."/>
            <person name="Koningstein G."/>
            <person name="Krogh S."/>
            <person name="Kumano M."/>
            <person name="Kurita K."/>
            <person name="Lapidus A."/>
            <person name="Lardinois S."/>
            <person name="Lauber J."/>
            <person name="Lazarevic V."/>
            <person name="Lee S.-M."/>
            <person name="Levine A."/>
            <person name="Liu H."/>
            <person name="Masuda S."/>
            <person name="Mauel C."/>
            <person name="Medigue C."/>
            <person name="Medina N."/>
            <person name="Mellado R.P."/>
            <person name="Mizuno M."/>
            <person name="Moestl D."/>
            <person name="Nakai S."/>
            <person name="Noback M."/>
            <person name="Noone D."/>
            <person name="O'Reilly M."/>
            <person name="Ogawa K."/>
            <person name="Ogiwara A."/>
            <person name="Oudega B."/>
            <person name="Park S.-H."/>
            <person name="Parro V."/>
            <person name="Pohl T.M."/>
            <person name="Portetelle D."/>
            <person name="Porwollik S."/>
            <person name="Prescott A.M."/>
            <person name="Presecan E."/>
            <person name="Pujic P."/>
            <person name="Purnelle B."/>
            <person name="Rapoport G."/>
            <person name="Rey M."/>
            <person name="Reynolds S."/>
            <person name="Rieger M."/>
            <person name="Rivolta C."/>
            <person name="Rocha E."/>
            <person name="Roche B."/>
            <person name="Rose M."/>
            <person name="Sadaie Y."/>
            <person name="Sato T."/>
            <person name="Scanlan E."/>
            <person name="Schleich S."/>
            <person name="Schroeter R."/>
            <person name="Scoffone F."/>
            <person name="Sekiguchi J."/>
            <person name="Sekowska A."/>
            <person name="Seror S.J."/>
            <person name="Serror P."/>
            <person name="Shin B.-S."/>
            <person name="Soldo B."/>
            <person name="Sorokin A."/>
            <person name="Tacconi E."/>
            <person name="Takagi T."/>
            <person name="Takahashi H."/>
            <person name="Takemaru K."/>
            <person name="Takeuchi M."/>
            <person name="Tamakoshi A."/>
            <person name="Tanaka T."/>
            <person name="Terpstra P."/>
            <person name="Tognoni A."/>
            <person name="Tosato V."/>
            <person name="Uchiyama S."/>
            <person name="Vandenbol M."/>
            <person name="Vannier F."/>
            <person name="Vassarotti A."/>
            <person name="Viari A."/>
            <person name="Wambutt R."/>
            <person name="Wedler E."/>
            <person name="Wedler H."/>
            <person name="Weitzenegger T."/>
            <person name="Winters P."/>
            <person name="Wipat A."/>
            <person name="Yamamoto H."/>
            <person name="Yamane K."/>
            <person name="Yasumoto K."/>
            <person name="Yata K."/>
            <person name="Yoshida K."/>
            <person name="Yoshikawa H.-F."/>
            <person name="Zumstein E."/>
            <person name="Yoshikawa H."/>
            <person name="Danchin A."/>
        </authorList>
    </citation>
    <scope>NUCLEOTIDE SEQUENCE [LARGE SCALE GENOMIC DNA]</scope>
    <source>
        <strain>168</strain>
    </source>
</reference>
<sequence length="55" mass="6100">MCKLCQTKKVIVEHTGIGVVFHPCPNCRSGTDLTPVIQKLEQMLTAGKARLNIYD</sequence>
<gene>
    <name type="primary">ykzK</name>
    <name type="ordered locus">BSU12539</name>
</gene>
<feature type="chain" id="PRO_0000379099" description="Uncharacterized protein YkzK">
    <location>
        <begin position="1"/>
        <end position="55"/>
    </location>
</feature>
<accession>C0H3Z5</accession>